<comment type="function">
    <text evidence="1">Rho GTPase-activating protein involved in the signal transduction pathway.</text>
</comment>
<comment type="subcellular location">
    <subcellularLocation>
        <location evidence="1">Cytoplasm</location>
    </subcellularLocation>
</comment>
<reference key="1">
    <citation type="journal article" date="2002" name="Nature">
        <title>Sequence and analysis of chromosome 2 of Dictyostelium discoideum.</title>
        <authorList>
            <person name="Gloeckner G."/>
            <person name="Eichinger L."/>
            <person name="Szafranski K."/>
            <person name="Pachebat J.A."/>
            <person name="Bankier A.T."/>
            <person name="Dear P.H."/>
            <person name="Lehmann R."/>
            <person name="Baumgart C."/>
            <person name="Parra G."/>
            <person name="Abril J.F."/>
            <person name="Guigo R."/>
            <person name="Kumpf K."/>
            <person name="Tunggal B."/>
            <person name="Cox E.C."/>
            <person name="Quail M.A."/>
            <person name="Platzer M."/>
            <person name="Rosenthal A."/>
            <person name="Noegel A.A."/>
        </authorList>
    </citation>
    <scope>NUCLEOTIDE SEQUENCE [LARGE SCALE GENOMIC DNA]</scope>
    <source>
        <strain>AX4</strain>
    </source>
</reference>
<reference key="2">
    <citation type="journal article" date="2005" name="Nature">
        <title>The genome of the social amoeba Dictyostelium discoideum.</title>
        <authorList>
            <person name="Eichinger L."/>
            <person name="Pachebat J.A."/>
            <person name="Gloeckner G."/>
            <person name="Rajandream M.A."/>
            <person name="Sucgang R."/>
            <person name="Berriman M."/>
            <person name="Song J."/>
            <person name="Olsen R."/>
            <person name="Szafranski K."/>
            <person name="Xu Q."/>
            <person name="Tunggal B."/>
            <person name="Kummerfeld S."/>
            <person name="Madera M."/>
            <person name="Konfortov B.A."/>
            <person name="Rivero F."/>
            <person name="Bankier A.T."/>
            <person name="Lehmann R."/>
            <person name="Hamlin N."/>
            <person name="Davies R."/>
            <person name="Gaudet P."/>
            <person name="Fey P."/>
            <person name="Pilcher K."/>
            <person name="Chen G."/>
            <person name="Saunders D."/>
            <person name="Sodergren E.J."/>
            <person name="Davis P."/>
            <person name="Kerhornou A."/>
            <person name="Nie X."/>
            <person name="Hall N."/>
            <person name="Anjard C."/>
            <person name="Hemphill L."/>
            <person name="Bason N."/>
            <person name="Farbrother P."/>
            <person name="Desany B."/>
            <person name="Just E."/>
            <person name="Morio T."/>
            <person name="Rost R."/>
            <person name="Churcher C.M."/>
            <person name="Cooper J."/>
            <person name="Haydock S."/>
            <person name="van Driessche N."/>
            <person name="Cronin A."/>
            <person name="Goodhead I."/>
            <person name="Muzny D.M."/>
            <person name="Mourier T."/>
            <person name="Pain A."/>
            <person name="Lu M."/>
            <person name="Harper D."/>
            <person name="Lindsay R."/>
            <person name="Hauser H."/>
            <person name="James K.D."/>
            <person name="Quiles M."/>
            <person name="Madan Babu M."/>
            <person name="Saito T."/>
            <person name="Buchrieser C."/>
            <person name="Wardroper A."/>
            <person name="Felder M."/>
            <person name="Thangavelu M."/>
            <person name="Johnson D."/>
            <person name="Knights A."/>
            <person name="Loulseged H."/>
            <person name="Mungall K.L."/>
            <person name="Oliver K."/>
            <person name="Price C."/>
            <person name="Quail M.A."/>
            <person name="Urushihara H."/>
            <person name="Hernandez J."/>
            <person name="Rabbinowitsch E."/>
            <person name="Steffen D."/>
            <person name="Sanders M."/>
            <person name="Ma J."/>
            <person name="Kohara Y."/>
            <person name="Sharp S."/>
            <person name="Simmonds M.N."/>
            <person name="Spiegler S."/>
            <person name="Tivey A."/>
            <person name="Sugano S."/>
            <person name="White B."/>
            <person name="Walker D."/>
            <person name="Woodward J.R."/>
            <person name="Winckler T."/>
            <person name="Tanaka Y."/>
            <person name="Shaulsky G."/>
            <person name="Schleicher M."/>
            <person name="Weinstock G.M."/>
            <person name="Rosenthal A."/>
            <person name="Cox E.C."/>
            <person name="Chisholm R.L."/>
            <person name="Gibbs R.A."/>
            <person name="Loomis W.F."/>
            <person name="Platzer M."/>
            <person name="Kay R.R."/>
            <person name="Williams J.G."/>
            <person name="Dear P.H."/>
            <person name="Noegel A.A."/>
            <person name="Barrell B.G."/>
            <person name="Kuspa A."/>
        </authorList>
    </citation>
    <scope>NUCLEOTIDE SEQUENCE [LARGE SCALE GENOMIC DNA]</scope>
    <source>
        <strain>AX4</strain>
    </source>
</reference>
<sequence length="566" mass="63422">MSGVGGESVHLRRSSTTATTTGSSKSSLNISKSVSPTGNKAVSPMSSPNSLQSGATPTIAQLQSLLKQQQQPNHSITTNNNNNKSVSVEIDDLKSQLQHSNINDTFNEDEEIEEVTDEVIINHDYHSSEDEYEDDEDEDENNNSVNNNSNNNSNNNNNNNTSISSAHSCESIAEEEELTASPILSRQYSYTIGHGTKPDVVLSIGGGFHSSPRSNRSESTIVHEDDLTNQNDKVINAKDKISSDYKRMMEDPEAFRNEKLKQRKSKFFTKKDLEEIPFNPSSGTQLRSTLFQQFMNEKIQMISENPEKYKSELMKFYKQNLKPQVPKSPQSSGSLSTHSDKLKTSSSLQRSRSVSQPPVVTGNSKNAIGSLDTILEKERKRDGNQDRQLPILFTKCVDFLSNDEALKTEGLFRVAGNSSEVEDLMKSILLYGSDIPSNCCYHVVSNMLKKFLRQLSTPVFTFKYHNDFIQTMKLNNDEERIKAIKEILKLIPPVNQLLIKELMKFLVKVTSFSNVNMMHAHNLGLMFGPNMLKAPSDSEMNAISMLDAGNQVITLLIENYNLFYDN</sequence>
<accession>Q86IG9</accession>
<accession>Q559C3</accession>
<gene>
    <name type="primary">gacH</name>
    <name type="ORF">DDB_G0272694</name>
</gene>
<proteinExistence type="inferred from homology"/>
<name>GACH_DICDI</name>
<organism>
    <name type="scientific">Dictyostelium discoideum</name>
    <name type="common">Social amoeba</name>
    <dbReference type="NCBI Taxonomy" id="44689"/>
    <lineage>
        <taxon>Eukaryota</taxon>
        <taxon>Amoebozoa</taxon>
        <taxon>Evosea</taxon>
        <taxon>Eumycetozoa</taxon>
        <taxon>Dictyostelia</taxon>
        <taxon>Dictyosteliales</taxon>
        <taxon>Dictyosteliaceae</taxon>
        <taxon>Dictyostelium</taxon>
    </lineage>
</organism>
<dbReference type="EMBL" id="AAFI02000008">
    <property type="protein sequence ID" value="EAL70984.1"/>
    <property type="molecule type" value="Genomic_DNA"/>
</dbReference>
<dbReference type="RefSeq" id="XP_644893.1">
    <property type="nucleotide sequence ID" value="XM_639801.1"/>
</dbReference>
<dbReference type="SMR" id="Q86IG9"/>
<dbReference type="FunCoup" id="Q86IG9">
    <property type="interactions" value="40"/>
</dbReference>
<dbReference type="STRING" id="44689.Q86IG9"/>
<dbReference type="PaxDb" id="44689-DDB0233788"/>
<dbReference type="EnsemblProtists" id="EAL70984">
    <property type="protein sequence ID" value="EAL70984"/>
    <property type="gene ID" value="DDB_G0272694"/>
</dbReference>
<dbReference type="GeneID" id="8618572"/>
<dbReference type="KEGG" id="ddi:DDB_G0272694"/>
<dbReference type="dictyBase" id="DDB_G0272694">
    <property type="gene designation" value="gacH"/>
</dbReference>
<dbReference type="VEuPathDB" id="AmoebaDB:DDB_G0272694"/>
<dbReference type="eggNOG" id="KOG4270">
    <property type="taxonomic scope" value="Eukaryota"/>
</dbReference>
<dbReference type="HOGENOM" id="CLU_481856_0_0_1"/>
<dbReference type="InParanoid" id="Q86IG9"/>
<dbReference type="OMA" id="NMMHSYN"/>
<dbReference type="PhylomeDB" id="Q86IG9"/>
<dbReference type="Reactome" id="R-DDI-9013148">
    <property type="pathway name" value="CDC42 GTPase cycle"/>
</dbReference>
<dbReference type="Reactome" id="R-DDI-9013149">
    <property type="pathway name" value="RAC1 GTPase cycle"/>
</dbReference>
<dbReference type="Reactome" id="R-DDI-9013423">
    <property type="pathway name" value="RAC3 GTPase cycle"/>
</dbReference>
<dbReference type="Reactome" id="R-DDI-9013424">
    <property type="pathway name" value="RHOV GTPase cycle"/>
</dbReference>
<dbReference type="PRO" id="PR:Q86IG9"/>
<dbReference type="Proteomes" id="UP000002195">
    <property type="component" value="Chromosome 2"/>
</dbReference>
<dbReference type="GO" id="GO:0005737">
    <property type="term" value="C:cytoplasm"/>
    <property type="evidence" value="ECO:0000318"/>
    <property type="project" value="GO_Central"/>
</dbReference>
<dbReference type="GO" id="GO:0005886">
    <property type="term" value="C:plasma membrane"/>
    <property type="evidence" value="ECO:0000318"/>
    <property type="project" value="GO_Central"/>
</dbReference>
<dbReference type="GO" id="GO:0005096">
    <property type="term" value="F:GTPase activator activity"/>
    <property type="evidence" value="ECO:0000318"/>
    <property type="project" value="GO_Central"/>
</dbReference>
<dbReference type="GO" id="GO:0043327">
    <property type="term" value="P:chemotaxis to cAMP"/>
    <property type="evidence" value="ECO:0000315"/>
    <property type="project" value="dictyBase"/>
</dbReference>
<dbReference type="GO" id="GO:0007264">
    <property type="term" value="P:small GTPase-mediated signal transduction"/>
    <property type="evidence" value="ECO:0000318"/>
    <property type="project" value="GO_Central"/>
</dbReference>
<dbReference type="GO" id="GO:0030587">
    <property type="term" value="P:sorocarp development"/>
    <property type="evidence" value="ECO:0000315"/>
    <property type="project" value="dictyBase"/>
</dbReference>
<dbReference type="CDD" id="cd00159">
    <property type="entry name" value="RhoGAP"/>
    <property type="match status" value="1"/>
</dbReference>
<dbReference type="FunFam" id="1.10.555.10:FF:000121">
    <property type="entry name" value="Rho GTPase-activating protein gacJ"/>
    <property type="match status" value="1"/>
</dbReference>
<dbReference type="Gene3D" id="1.10.555.10">
    <property type="entry name" value="Rho GTPase activation protein"/>
    <property type="match status" value="1"/>
</dbReference>
<dbReference type="InterPro" id="IPR050729">
    <property type="entry name" value="Rho-GAP"/>
</dbReference>
<dbReference type="InterPro" id="IPR008936">
    <property type="entry name" value="Rho_GTPase_activation_prot"/>
</dbReference>
<dbReference type="InterPro" id="IPR000198">
    <property type="entry name" value="RhoGAP_dom"/>
</dbReference>
<dbReference type="PANTHER" id="PTHR23176:SF8">
    <property type="entry name" value="RHO GTPASE-ACTIVATING PROTEIN GACH"/>
    <property type="match status" value="1"/>
</dbReference>
<dbReference type="PANTHER" id="PTHR23176">
    <property type="entry name" value="RHO/RAC/CDC GTPASE-ACTIVATING PROTEIN"/>
    <property type="match status" value="1"/>
</dbReference>
<dbReference type="Pfam" id="PF00620">
    <property type="entry name" value="RhoGAP"/>
    <property type="match status" value="1"/>
</dbReference>
<dbReference type="SMART" id="SM00324">
    <property type="entry name" value="RhoGAP"/>
    <property type="match status" value="1"/>
</dbReference>
<dbReference type="SUPFAM" id="SSF48350">
    <property type="entry name" value="GTPase activation domain, GAP"/>
    <property type="match status" value="1"/>
</dbReference>
<dbReference type="PROSITE" id="PS50238">
    <property type="entry name" value="RHOGAP"/>
    <property type="match status" value="1"/>
</dbReference>
<feature type="chain" id="PRO_0000380203" description="Rho GTPase-activating protein gacH">
    <location>
        <begin position="1"/>
        <end position="566"/>
    </location>
</feature>
<feature type="domain" description="Rho-GAP" evidence="2">
    <location>
        <begin position="369"/>
        <end position="564"/>
    </location>
</feature>
<feature type="region of interest" description="Disordered" evidence="3">
    <location>
        <begin position="1"/>
        <end position="56"/>
    </location>
</feature>
<feature type="region of interest" description="Disordered" evidence="3">
    <location>
        <begin position="65"/>
        <end position="84"/>
    </location>
</feature>
<feature type="region of interest" description="Disordered" evidence="3">
    <location>
        <begin position="128"/>
        <end position="168"/>
    </location>
</feature>
<feature type="region of interest" description="Disordered" evidence="3">
    <location>
        <begin position="322"/>
        <end position="366"/>
    </location>
</feature>
<feature type="compositionally biased region" description="Low complexity" evidence="3">
    <location>
        <begin position="14"/>
        <end position="35"/>
    </location>
</feature>
<feature type="compositionally biased region" description="Polar residues" evidence="3">
    <location>
        <begin position="36"/>
        <end position="56"/>
    </location>
</feature>
<feature type="compositionally biased region" description="Low complexity" evidence="3">
    <location>
        <begin position="65"/>
        <end position="83"/>
    </location>
</feature>
<feature type="compositionally biased region" description="Acidic residues" evidence="3">
    <location>
        <begin position="130"/>
        <end position="141"/>
    </location>
</feature>
<feature type="compositionally biased region" description="Low complexity" evidence="3">
    <location>
        <begin position="142"/>
        <end position="160"/>
    </location>
</feature>
<feature type="compositionally biased region" description="Polar residues" evidence="3">
    <location>
        <begin position="327"/>
        <end position="337"/>
    </location>
</feature>
<feature type="compositionally biased region" description="Low complexity" evidence="3">
    <location>
        <begin position="345"/>
        <end position="356"/>
    </location>
</feature>
<feature type="site" description="Arginine finger; crucial for GTP hydrolysis by stabilizing the transition state" evidence="2">
    <location>
        <position position="413"/>
    </location>
</feature>
<protein>
    <recommendedName>
        <fullName>Rho GTPase-activating protein gacH</fullName>
    </recommendedName>
    <alternativeName>
        <fullName>GTPase activating factor for raC protein H</fullName>
    </alternativeName>
</protein>
<keyword id="KW-0963">Cytoplasm</keyword>
<keyword id="KW-0343">GTPase activation</keyword>
<keyword id="KW-1185">Reference proteome</keyword>
<evidence type="ECO:0000250" key="1"/>
<evidence type="ECO:0000255" key="2">
    <source>
        <dbReference type="PROSITE-ProRule" id="PRU00172"/>
    </source>
</evidence>
<evidence type="ECO:0000256" key="3">
    <source>
        <dbReference type="SAM" id="MobiDB-lite"/>
    </source>
</evidence>